<name>Y128_TREPA</name>
<accession>O83165</accession>
<dbReference type="EMBL" id="AE000520">
    <property type="protein sequence ID" value="AAC65120.1"/>
    <property type="molecule type" value="Genomic_DNA"/>
</dbReference>
<dbReference type="PIR" id="E71362">
    <property type="entry name" value="E71362"/>
</dbReference>
<dbReference type="RefSeq" id="WP_010881577.1">
    <property type="nucleotide sequence ID" value="NC_021490.2"/>
</dbReference>
<dbReference type="IntAct" id="O83165">
    <property type="interactions" value="11"/>
</dbReference>
<dbReference type="STRING" id="243276.TP_0128"/>
<dbReference type="EnsemblBacteria" id="AAC65120">
    <property type="protein sequence ID" value="AAC65120"/>
    <property type="gene ID" value="TP_0128"/>
</dbReference>
<dbReference type="KEGG" id="tpa:TP_0128"/>
<dbReference type="KEGG" id="tpw:TPANIC_0128"/>
<dbReference type="HOGENOM" id="CLU_2412296_0_0_12"/>
<dbReference type="Proteomes" id="UP000000811">
    <property type="component" value="Chromosome"/>
</dbReference>
<sequence>MEFLRATASREVDVNSGWGYGSGVERGFLCEGDVRACLVPASHFVRAGTAPGTTPGTAAACLFVPPYVLGVTPAGTLPFGLPSQSVLGGLRLAPVHASSLLEGLGATIFFRCNAP</sequence>
<protein>
    <recommendedName>
        <fullName>Uncharacterized protein TP_0128</fullName>
    </recommendedName>
</protein>
<reference key="1">
    <citation type="journal article" date="1998" name="Science">
        <title>Complete genome sequence of Treponema pallidum, the syphilis spirochete.</title>
        <authorList>
            <person name="Fraser C.M."/>
            <person name="Norris S.J."/>
            <person name="Weinstock G.M."/>
            <person name="White O."/>
            <person name="Sutton G.G."/>
            <person name="Dodson R.J."/>
            <person name="Gwinn M.L."/>
            <person name="Hickey E.K."/>
            <person name="Clayton R.A."/>
            <person name="Ketchum K.A."/>
            <person name="Sodergren E."/>
            <person name="Hardham J.M."/>
            <person name="McLeod M.P."/>
            <person name="Salzberg S.L."/>
            <person name="Peterson J.D."/>
            <person name="Khalak H.G."/>
            <person name="Richardson D.L."/>
            <person name="Howell J.K."/>
            <person name="Chidambaram M."/>
            <person name="Utterback T.R."/>
            <person name="McDonald L.A."/>
            <person name="Artiach P."/>
            <person name="Bowman C."/>
            <person name="Cotton M.D."/>
            <person name="Fujii C."/>
            <person name="Garland S.A."/>
            <person name="Hatch B."/>
            <person name="Horst K."/>
            <person name="Roberts K.M."/>
            <person name="Sandusky M."/>
            <person name="Weidman J.F."/>
            <person name="Smith H.O."/>
            <person name="Venter J.C."/>
        </authorList>
    </citation>
    <scope>NUCLEOTIDE SEQUENCE [LARGE SCALE GENOMIC DNA]</scope>
    <source>
        <strain>Nichols</strain>
    </source>
</reference>
<proteinExistence type="predicted"/>
<gene>
    <name type="ordered locus">TP_0128</name>
</gene>
<organism>
    <name type="scientific">Treponema pallidum (strain Nichols)</name>
    <dbReference type="NCBI Taxonomy" id="243276"/>
    <lineage>
        <taxon>Bacteria</taxon>
        <taxon>Pseudomonadati</taxon>
        <taxon>Spirochaetota</taxon>
        <taxon>Spirochaetia</taxon>
        <taxon>Spirochaetales</taxon>
        <taxon>Treponemataceae</taxon>
        <taxon>Treponema</taxon>
    </lineage>
</organism>
<feature type="chain" id="PRO_0000202194" description="Uncharacterized protein TP_0128">
    <location>
        <begin position="1"/>
        <end position="115"/>
    </location>
</feature>
<keyword id="KW-1185">Reference proteome</keyword>